<keyword id="KW-0044">Antibiotic</keyword>
<keyword id="KW-0929">Antimicrobial</keyword>
<keyword id="KW-0165">Cleavage on pair of basic residues</keyword>
<keyword id="KW-0903">Direct protein sequencing</keyword>
<keyword id="KW-0325">Glycoprotein</keyword>
<keyword id="KW-0732">Signal</keyword>
<protein>
    <recommendedName>
        <fullName>Achacin</fullName>
    </recommendedName>
</protein>
<accession>P35903</accession>
<comment type="function">
    <text>Antibacterial glycoprotein.</text>
</comment>
<comment type="subunit">
    <text>Homodimer.</text>
</comment>
<comment type="tissue specificity">
    <text>Collar tissue.</text>
</comment>
<comment type="similarity">
    <text evidence="3">To A.kurodai aplysianin-A.</text>
</comment>
<sequence>MLLLNSALFILCLVCWLPGTSSSRVLTRREGPQCSRSVDVAVVGAGPSGTYSAYKLRNKGQTVELFEYSNRIGGRLFTTHLPNVPDLNLESGGMRYFKNHHKIFGVLVKELNLSNKEFTEGFGKPGRTRFFARGKSLTLEEMTSGDVPYNLSTEEKANQANLAGYYLKKLTGFDGEVLTIPQANKLEVDDGRKLYQLTVDEALDKVGTPEGKEFLKAFSTGNTEFIEGVSAVNYFLVELGEREEEILTLTDGMSALPQALADAFLKSSTSHALTLNRKLQSLSKTDNGLYLLEFLETNTHEGYTEESNITDLVCARKVILAIPQSALIHLDWKPLRSETVNEAFNAVKFIPTSKVFLTFPTAWWLSDAVKNPAFVVKSTSPFNQMYDWKSSNVTGDAAMIASYADTSDTKFQENLNSKGELIPGSAPGANRVTVALKEELLSQLSQAYGIERSDIPEPKSGTSQFWSSYPFEGDWTVWKAGYHCEYTQYIIERPSLIDDVFVVGSDHVNCIENAWTESAFLSVENVFEKYF</sequence>
<dbReference type="EMBL" id="X64584">
    <property type="protein sequence ID" value="CAA45871.1"/>
    <property type="molecule type" value="mRNA"/>
</dbReference>
<dbReference type="PIR" id="S28260">
    <property type="entry name" value="S28260"/>
</dbReference>
<dbReference type="SMR" id="P35903"/>
<dbReference type="GO" id="GO:0016491">
    <property type="term" value="F:oxidoreductase activity"/>
    <property type="evidence" value="ECO:0007669"/>
    <property type="project" value="InterPro"/>
</dbReference>
<dbReference type="GO" id="GO:0042742">
    <property type="term" value="P:defense response to bacterium"/>
    <property type="evidence" value="ECO:0007669"/>
    <property type="project" value="UniProtKB-KW"/>
</dbReference>
<dbReference type="Gene3D" id="3.50.50.60">
    <property type="entry name" value="FAD/NAD(P)-binding domain"/>
    <property type="match status" value="1"/>
</dbReference>
<dbReference type="InterPro" id="IPR002937">
    <property type="entry name" value="Amino_oxidase"/>
</dbReference>
<dbReference type="InterPro" id="IPR036188">
    <property type="entry name" value="FAD/NAD-bd_sf"/>
</dbReference>
<dbReference type="InterPro" id="IPR050281">
    <property type="entry name" value="Flavin_monoamine_oxidase"/>
</dbReference>
<dbReference type="PANTHER" id="PTHR10742">
    <property type="entry name" value="FLAVIN MONOAMINE OXIDASE"/>
    <property type="match status" value="1"/>
</dbReference>
<dbReference type="PANTHER" id="PTHR10742:SF410">
    <property type="entry name" value="LYSINE-SPECIFIC HISTONE DEMETHYLASE 2"/>
    <property type="match status" value="1"/>
</dbReference>
<dbReference type="Pfam" id="PF01593">
    <property type="entry name" value="Amino_oxidase"/>
    <property type="match status" value="1"/>
</dbReference>
<dbReference type="PRINTS" id="PR00419">
    <property type="entry name" value="ADXRDTASE"/>
</dbReference>
<dbReference type="SUPFAM" id="SSF54373">
    <property type="entry name" value="FAD-linked reductases, C-terminal domain"/>
    <property type="match status" value="1"/>
</dbReference>
<dbReference type="SUPFAM" id="SSF51905">
    <property type="entry name" value="FAD/NAD(P)-binding domain"/>
    <property type="match status" value="1"/>
</dbReference>
<name>ACHC_LISFU</name>
<proteinExistence type="evidence at protein level"/>
<reference key="1">
    <citation type="journal article" date="1992" name="Eur. J. Biochem.">
        <title>Molecular cloning of the antibacterial protein of the giant African snail, Achatina fulica Ferussac.</title>
        <authorList>
            <person name="Obara K."/>
            <person name="Otsuka-Fuchino H."/>
            <person name="Sattayasai N."/>
            <person name="Nonomura Y."/>
            <person name="Tsuchiya T."/>
            <person name="Tamiya T."/>
        </authorList>
    </citation>
    <scope>NUCLEOTIDE SEQUENCE [MRNA]</scope>
    <scope>PROTEIN SEQUENCE OF 30-41; 206-216 AND 285-294</scope>
    <source>
        <strain>Ferussac</strain>
        <tissue>Collar</tissue>
    </source>
</reference>
<evidence type="ECO:0000255" key="1"/>
<evidence type="ECO:0000269" key="2">
    <source>
    </source>
</evidence>
<evidence type="ECO:0000305" key="3"/>
<feature type="signal peptide" evidence="1">
    <location>
        <begin position="1"/>
        <end position="22"/>
    </location>
</feature>
<feature type="propeptide" id="PRO_0000020621" evidence="2">
    <location>
        <begin position="23"/>
        <end position="29"/>
    </location>
</feature>
<feature type="chain" id="PRO_0000020622" description="Achacin">
    <location>
        <begin position="30"/>
        <end position="531"/>
    </location>
</feature>
<feature type="glycosylation site" description="N-linked (GlcNAc...) asparagine" evidence="1">
    <location>
        <position position="112"/>
    </location>
</feature>
<feature type="glycosylation site" description="N-linked (GlcNAc...) asparagine" evidence="1">
    <location>
        <position position="150"/>
    </location>
</feature>
<feature type="glycosylation site" description="N-linked (GlcNAc...) asparagine" evidence="1">
    <location>
        <position position="308"/>
    </location>
</feature>
<feature type="glycosylation site" description="N-linked (GlcNAc...) asparagine" evidence="1">
    <location>
        <position position="392"/>
    </location>
</feature>
<organism>
    <name type="scientific">Lissachatina fulica</name>
    <name type="common">Giant African land snail</name>
    <name type="synonym">Achatina fulica</name>
    <dbReference type="NCBI Taxonomy" id="2315439"/>
    <lineage>
        <taxon>Eukaryota</taxon>
        <taxon>Metazoa</taxon>
        <taxon>Spiralia</taxon>
        <taxon>Lophotrochozoa</taxon>
        <taxon>Mollusca</taxon>
        <taxon>Gastropoda</taxon>
        <taxon>Heterobranchia</taxon>
        <taxon>Euthyneura</taxon>
        <taxon>Panpulmonata</taxon>
        <taxon>Eupulmonata</taxon>
        <taxon>Stylommatophora</taxon>
        <taxon>Helicina</taxon>
        <taxon>Achatinoidea</taxon>
        <taxon>Achatinidae</taxon>
        <taxon>Lissachatina</taxon>
    </lineage>
</organism>